<protein>
    <recommendedName>
        <fullName evidence="1">Proline--tRNA ligase</fullName>
        <ecNumber evidence="1">6.1.1.15</ecNumber>
    </recommendedName>
    <alternativeName>
        <fullName evidence="1">Prolyl-tRNA synthetase</fullName>
        <shortName evidence="1">ProRS</shortName>
    </alternativeName>
</protein>
<organism>
    <name type="scientific">Zymomonas mobilis subsp. mobilis (strain ATCC 31821 / ZM4 / CP4)</name>
    <dbReference type="NCBI Taxonomy" id="264203"/>
    <lineage>
        <taxon>Bacteria</taxon>
        <taxon>Pseudomonadati</taxon>
        <taxon>Pseudomonadota</taxon>
        <taxon>Alphaproteobacteria</taxon>
        <taxon>Sphingomonadales</taxon>
        <taxon>Zymomonadaceae</taxon>
        <taxon>Zymomonas</taxon>
    </lineage>
</organism>
<accession>P0DJA8</accession>
<accession>P75000</accession>
<accession>Q5NQC1</accession>
<keyword id="KW-0030">Aminoacyl-tRNA synthetase</keyword>
<keyword id="KW-0067">ATP-binding</keyword>
<keyword id="KW-0963">Cytoplasm</keyword>
<keyword id="KW-0436">Ligase</keyword>
<keyword id="KW-0547">Nucleotide-binding</keyword>
<keyword id="KW-0648">Protein biosynthesis</keyword>
<keyword id="KW-1185">Reference proteome</keyword>
<reference key="1">
    <citation type="journal article" date="2005" name="Nat. Biotechnol.">
        <title>The genome sequence of the ethanologenic bacterium Zymomonas mobilis ZM4.</title>
        <authorList>
            <person name="Seo J.-S."/>
            <person name="Chong H."/>
            <person name="Park H.S."/>
            <person name="Yoon K.-O."/>
            <person name="Jung C."/>
            <person name="Kim J.J."/>
            <person name="Hong J.H."/>
            <person name="Kim H."/>
            <person name="Kim J.-H."/>
            <person name="Kil J.-I."/>
            <person name="Park C.J."/>
            <person name="Oh H.-M."/>
            <person name="Lee J.-S."/>
            <person name="Jin S.-J."/>
            <person name="Um H.-W."/>
            <person name="Lee H.-J."/>
            <person name="Oh S.-J."/>
            <person name="Kim J.Y."/>
            <person name="Kang H.L."/>
            <person name="Lee S.Y."/>
            <person name="Lee K.J."/>
            <person name="Kang H.S."/>
        </authorList>
    </citation>
    <scope>NUCLEOTIDE SEQUENCE [LARGE SCALE GENOMIC DNA]</scope>
    <source>
        <strain>ATCC 31821 / ZM4 / CP4</strain>
    </source>
</reference>
<reference key="2">
    <citation type="journal article" date="2009" name="Nat. Biotechnol.">
        <title>Improved genome annotation for Zymomonas mobilis.</title>
        <authorList>
            <person name="Yang S."/>
            <person name="Pappas K.M."/>
            <person name="Hauser L.J."/>
            <person name="Land M.L."/>
            <person name="Chen G.L."/>
            <person name="Hurst G.B."/>
            <person name="Pan C."/>
            <person name="Kouvelis V.N."/>
            <person name="Typas M.A."/>
            <person name="Pelletier D.A."/>
            <person name="Klingeman D.M."/>
            <person name="Chang Y.J."/>
            <person name="Samatova N.F."/>
            <person name="Brown S.D."/>
        </authorList>
    </citation>
    <scope>SEQUENCE REVISION</scope>
</reference>
<sequence>MRLSRYFLPVMKETPADAQIISHKLMLRAGMIRQTAAGIYAWLPLGLRVLRRIEKIIREEQARAGALELLMPTLQTADLWRESGRYDAYGPEMLRIKDRHNRELLYGPTNEEMITALIRDNLQSYRDLPRIFYHIQWKFRDEVRPRFGVMRGREFLMKDAYSFDIDETAGRHNYNRMFVAYLNSFSRLGLRAIPMQADTGPIGGDLSHEFIVLAPNGESDVFYHSNWEQPTRHIEADFDDPKALQSIVNDHISDYAATDEKRDPLREAQAGDKLRQSRGIEVGHIFFFGTKYSKPMGFTLPGPDGKPIPIQMGSYGIGISRLLGAIIEASHDDNGIIWPEAVAPYHVGLINLRIDDENCRAIADSLYQRLEAAGIDTLYDDRNERGGAKFATMDLIGLPWQVVIGPKGAEKGVVELKNRANGEKQTISVENAFNLLTAGHQQR</sequence>
<gene>
    <name evidence="1" type="primary">proS</name>
    <name type="ordered locus">ZMO0460</name>
</gene>
<evidence type="ECO:0000255" key="1">
    <source>
        <dbReference type="HAMAP-Rule" id="MF_01570"/>
    </source>
</evidence>
<name>SYP_ZYMMO</name>
<proteinExistence type="inferred from homology"/>
<dbReference type="EC" id="6.1.1.15" evidence="1"/>
<dbReference type="EMBL" id="AE008692">
    <property type="protein sequence ID" value="AAV89084.2"/>
    <property type="molecule type" value="Genomic_DNA"/>
</dbReference>
<dbReference type="RefSeq" id="WP_011240369.1">
    <property type="nucleotide sequence ID" value="NZ_CP035711.1"/>
</dbReference>
<dbReference type="SMR" id="P0DJA8"/>
<dbReference type="STRING" id="264203.ZMO0460"/>
<dbReference type="KEGG" id="zmo:ZMO0460"/>
<dbReference type="eggNOG" id="COG0442">
    <property type="taxonomic scope" value="Bacteria"/>
</dbReference>
<dbReference type="HOGENOM" id="CLU_016739_4_2_5"/>
<dbReference type="Proteomes" id="UP000001173">
    <property type="component" value="Chromosome"/>
</dbReference>
<dbReference type="GO" id="GO:0005829">
    <property type="term" value="C:cytosol"/>
    <property type="evidence" value="ECO:0007669"/>
    <property type="project" value="TreeGrafter"/>
</dbReference>
<dbReference type="GO" id="GO:0005524">
    <property type="term" value="F:ATP binding"/>
    <property type="evidence" value="ECO:0007669"/>
    <property type="project" value="UniProtKB-UniRule"/>
</dbReference>
<dbReference type="GO" id="GO:0004827">
    <property type="term" value="F:proline-tRNA ligase activity"/>
    <property type="evidence" value="ECO:0007669"/>
    <property type="project" value="UniProtKB-UniRule"/>
</dbReference>
<dbReference type="GO" id="GO:0006433">
    <property type="term" value="P:prolyl-tRNA aminoacylation"/>
    <property type="evidence" value="ECO:0007669"/>
    <property type="project" value="UniProtKB-UniRule"/>
</dbReference>
<dbReference type="CDD" id="cd00861">
    <property type="entry name" value="ProRS_anticodon_short"/>
    <property type="match status" value="1"/>
</dbReference>
<dbReference type="CDD" id="cd00779">
    <property type="entry name" value="ProRS_core_prok"/>
    <property type="match status" value="1"/>
</dbReference>
<dbReference type="FunFam" id="3.30.930.10:FF:000042">
    <property type="entry name" value="probable proline--tRNA ligase, mitochondrial"/>
    <property type="match status" value="1"/>
</dbReference>
<dbReference type="FunFam" id="3.40.50.800:FF:000032">
    <property type="entry name" value="Proline--tRNA ligase"/>
    <property type="match status" value="1"/>
</dbReference>
<dbReference type="Gene3D" id="3.40.50.800">
    <property type="entry name" value="Anticodon-binding domain"/>
    <property type="match status" value="1"/>
</dbReference>
<dbReference type="Gene3D" id="3.30.930.10">
    <property type="entry name" value="Bira Bifunctional Protein, Domain 2"/>
    <property type="match status" value="1"/>
</dbReference>
<dbReference type="HAMAP" id="MF_01570">
    <property type="entry name" value="Pro_tRNA_synth_type2"/>
    <property type="match status" value="1"/>
</dbReference>
<dbReference type="InterPro" id="IPR002314">
    <property type="entry name" value="aa-tRNA-synt_IIb"/>
</dbReference>
<dbReference type="InterPro" id="IPR006195">
    <property type="entry name" value="aa-tRNA-synth_II"/>
</dbReference>
<dbReference type="InterPro" id="IPR045864">
    <property type="entry name" value="aa-tRNA-synth_II/BPL/LPL"/>
</dbReference>
<dbReference type="InterPro" id="IPR004154">
    <property type="entry name" value="Anticodon-bd"/>
</dbReference>
<dbReference type="InterPro" id="IPR036621">
    <property type="entry name" value="Anticodon-bd_dom_sf"/>
</dbReference>
<dbReference type="InterPro" id="IPR002316">
    <property type="entry name" value="Pro-tRNA-ligase_IIa"/>
</dbReference>
<dbReference type="InterPro" id="IPR004500">
    <property type="entry name" value="Pro-tRNA-synth_IIa_bac-type"/>
</dbReference>
<dbReference type="InterPro" id="IPR050062">
    <property type="entry name" value="Pro-tRNA_synthetase"/>
</dbReference>
<dbReference type="InterPro" id="IPR023716">
    <property type="entry name" value="Prolyl-tRNA_ligase_IIa_type2"/>
</dbReference>
<dbReference type="InterPro" id="IPR044140">
    <property type="entry name" value="ProRS_anticodon_short"/>
</dbReference>
<dbReference type="InterPro" id="IPR033730">
    <property type="entry name" value="ProRS_core_prok"/>
</dbReference>
<dbReference type="NCBIfam" id="NF008979">
    <property type="entry name" value="PRK12325.1"/>
    <property type="match status" value="1"/>
</dbReference>
<dbReference type="NCBIfam" id="TIGR00409">
    <property type="entry name" value="proS_fam_II"/>
    <property type="match status" value="1"/>
</dbReference>
<dbReference type="PANTHER" id="PTHR42753">
    <property type="entry name" value="MITOCHONDRIAL RIBOSOME PROTEIN L39/PROLYL-TRNA LIGASE FAMILY MEMBER"/>
    <property type="match status" value="1"/>
</dbReference>
<dbReference type="PANTHER" id="PTHR42753:SF2">
    <property type="entry name" value="PROLINE--TRNA LIGASE"/>
    <property type="match status" value="1"/>
</dbReference>
<dbReference type="Pfam" id="PF03129">
    <property type="entry name" value="HGTP_anticodon"/>
    <property type="match status" value="1"/>
</dbReference>
<dbReference type="Pfam" id="PF00587">
    <property type="entry name" value="tRNA-synt_2b"/>
    <property type="match status" value="1"/>
</dbReference>
<dbReference type="PRINTS" id="PR01046">
    <property type="entry name" value="TRNASYNTHPRO"/>
</dbReference>
<dbReference type="SUPFAM" id="SSF52954">
    <property type="entry name" value="Class II aaRS ABD-related"/>
    <property type="match status" value="1"/>
</dbReference>
<dbReference type="SUPFAM" id="SSF55681">
    <property type="entry name" value="Class II aaRS and biotin synthetases"/>
    <property type="match status" value="1"/>
</dbReference>
<dbReference type="PROSITE" id="PS50862">
    <property type="entry name" value="AA_TRNA_LIGASE_II"/>
    <property type="match status" value="1"/>
</dbReference>
<feature type="chain" id="PRO_0000139349" description="Proline--tRNA ligase">
    <location>
        <begin position="1"/>
        <end position="443"/>
    </location>
</feature>
<comment type="function">
    <text evidence="1">Catalyzes the attachment of proline to tRNA(Pro) in a two-step reaction: proline is first activated by ATP to form Pro-AMP and then transferred to the acceptor end of tRNA(Pro).</text>
</comment>
<comment type="catalytic activity">
    <reaction evidence="1">
        <text>tRNA(Pro) + L-proline + ATP = L-prolyl-tRNA(Pro) + AMP + diphosphate</text>
        <dbReference type="Rhea" id="RHEA:14305"/>
        <dbReference type="Rhea" id="RHEA-COMP:9700"/>
        <dbReference type="Rhea" id="RHEA-COMP:9702"/>
        <dbReference type="ChEBI" id="CHEBI:30616"/>
        <dbReference type="ChEBI" id="CHEBI:33019"/>
        <dbReference type="ChEBI" id="CHEBI:60039"/>
        <dbReference type="ChEBI" id="CHEBI:78442"/>
        <dbReference type="ChEBI" id="CHEBI:78532"/>
        <dbReference type="ChEBI" id="CHEBI:456215"/>
        <dbReference type="EC" id="6.1.1.15"/>
    </reaction>
</comment>
<comment type="subunit">
    <text evidence="1">Homodimer.</text>
</comment>
<comment type="subcellular location">
    <subcellularLocation>
        <location evidence="1">Cytoplasm</location>
    </subcellularLocation>
</comment>
<comment type="similarity">
    <text evidence="1">Belongs to the class-II aminoacyl-tRNA synthetase family. ProS type 2 subfamily.</text>
</comment>